<reference key="1">
    <citation type="journal article" date="2000" name="Nature">
        <title>Sequence and analysis of chromosome 3 of the plant Arabidopsis thaliana.</title>
        <authorList>
            <person name="Salanoubat M."/>
            <person name="Lemcke K."/>
            <person name="Rieger M."/>
            <person name="Ansorge W."/>
            <person name="Unseld M."/>
            <person name="Fartmann B."/>
            <person name="Valle G."/>
            <person name="Bloecker H."/>
            <person name="Perez-Alonso M."/>
            <person name="Obermaier B."/>
            <person name="Delseny M."/>
            <person name="Boutry M."/>
            <person name="Grivell L.A."/>
            <person name="Mache R."/>
            <person name="Puigdomenech P."/>
            <person name="De Simone V."/>
            <person name="Choisne N."/>
            <person name="Artiguenave F."/>
            <person name="Robert C."/>
            <person name="Brottier P."/>
            <person name="Wincker P."/>
            <person name="Cattolico L."/>
            <person name="Weissenbach J."/>
            <person name="Saurin W."/>
            <person name="Quetier F."/>
            <person name="Schaefer M."/>
            <person name="Mueller-Auer S."/>
            <person name="Gabel C."/>
            <person name="Fuchs M."/>
            <person name="Benes V."/>
            <person name="Wurmbach E."/>
            <person name="Drzonek H."/>
            <person name="Erfle H."/>
            <person name="Jordan N."/>
            <person name="Bangert S."/>
            <person name="Wiedelmann R."/>
            <person name="Kranz H."/>
            <person name="Voss H."/>
            <person name="Holland R."/>
            <person name="Brandt P."/>
            <person name="Nyakatura G."/>
            <person name="Vezzi A."/>
            <person name="D'Angelo M."/>
            <person name="Pallavicini A."/>
            <person name="Toppo S."/>
            <person name="Simionati B."/>
            <person name="Conrad A."/>
            <person name="Hornischer K."/>
            <person name="Kauer G."/>
            <person name="Loehnert T.-H."/>
            <person name="Nordsiek G."/>
            <person name="Reichelt J."/>
            <person name="Scharfe M."/>
            <person name="Schoen O."/>
            <person name="Bargues M."/>
            <person name="Terol J."/>
            <person name="Climent J."/>
            <person name="Navarro P."/>
            <person name="Collado C."/>
            <person name="Perez-Perez A."/>
            <person name="Ottenwaelder B."/>
            <person name="Duchemin D."/>
            <person name="Cooke R."/>
            <person name="Laudie M."/>
            <person name="Berger-Llauro C."/>
            <person name="Purnelle B."/>
            <person name="Masuy D."/>
            <person name="de Haan M."/>
            <person name="Maarse A.C."/>
            <person name="Alcaraz J.-P."/>
            <person name="Cottet A."/>
            <person name="Casacuberta E."/>
            <person name="Monfort A."/>
            <person name="Argiriou A."/>
            <person name="Flores M."/>
            <person name="Liguori R."/>
            <person name="Vitale D."/>
            <person name="Mannhaupt G."/>
            <person name="Haase D."/>
            <person name="Schoof H."/>
            <person name="Rudd S."/>
            <person name="Zaccaria P."/>
            <person name="Mewes H.-W."/>
            <person name="Mayer K.F.X."/>
            <person name="Kaul S."/>
            <person name="Town C.D."/>
            <person name="Koo H.L."/>
            <person name="Tallon L.J."/>
            <person name="Jenkins J."/>
            <person name="Rooney T."/>
            <person name="Rizzo M."/>
            <person name="Walts A."/>
            <person name="Utterback T."/>
            <person name="Fujii C.Y."/>
            <person name="Shea T.P."/>
            <person name="Creasy T.H."/>
            <person name="Haas B."/>
            <person name="Maiti R."/>
            <person name="Wu D."/>
            <person name="Peterson J."/>
            <person name="Van Aken S."/>
            <person name="Pai G."/>
            <person name="Militscher J."/>
            <person name="Sellers P."/>
            <person name="Gill J.E."/>
            <person name="Feldblyum T.V."/>
            <person name="Preuss D."/>
            <person name="Lin X."/>
            <person name="Nierman W.C."/>
            <person name="Salzberg S.L."/>
            <person name="White O."/>
            <person name="Venter J.C."/>
            <person name="Fraser C.M."/>
            <person name="Kaneko T."/>
            <person name="Nakamura Y."/>
            <person name="Sato S."/>
            <person name="Kato T."/>
            <person name="Asamizu E."/>
            <person name="Sasamoto S."/>
            <person name="Kimura T."/>
            <person name="Idesawa K."/>
            <person name="Kawashima K."/>
            <person name="Kishida Y."/>
            <person name="Kiyokawa C."/>
            <person name="Kohara M."/>
            <person name="Matsumoto M."/>
            <person name="Matsuno A."/>
            <person name="Muraki A."/>
            <person name="Nakayama S."/>
            <person name="Nakazaki N."/>
            <person name="Shinpo S."/>
            <person name="Takeuchi C."/>
            <person name="Wada T."/>
            <person name="Watanabe A."/>
            <person name="Yamada M."/>
            <person name="Yasuda M."/>
            <person name="Tabata S."/>
        </authorList>
    </citation>
    <scope>NUCLEOTIDE SEQUENCE [LARGE SCALE GENOMIC DNA]</scope>
    <source>
        <strain>cv. Columbia</strain>
    </source>
</reference>
<reference key="2">
    <citation type="journal article" date="2017" name="Plant J.">
        <title>Araport11: a complete reannotation of the Arabidopsis thaliana reference genome.</title>
        <authorList>
            <person name="Cheng C.Y."/>
            <person name="Krishnakumar V."/>
            <person name="Chan A.P."/>
            <person name="Thibaud-Nissen F."/>
            <person name="Schobel S."/>
            <person name="Town C.D."/>
        </authorList>
    </citation>
    <scope>GENOME REANNOTATION</scope>
    <source>
        <strain>cv. Columbia</strain>
    </source>
</reference>
<reference key="3">
    <citation type="submission" date="2005-05" db="EMBL/GenBank/DDBJ databases">
        <authorList>
            <person name="Underwood B.A."/>
            <person name="Xiao Y.-L."/>
            <person name="Moskal W.A. Jr."/>
            <person name="Monaghan E.L."/>
            <person name="Wang W."/>
            <person name="Redman J.C."/>
            <person name="Wu H.C."/>
            <person name="Utterback T."/>
            <person name="Town C.D."/>
        </authorList>
    </citation>
    <scope>NUCLEOTIDE SEQUENCE [LARGE SCALE MRNA]</scope>
    <source>
        <strain>cv. Columbia</strain>
    </source>
</reference>
<reference key="4">
    <citation type="journal article" date="2002" name="Proc. Natl. Acad. Sci. U.S.A.">
        <title>The F-box subunit of the SCF E3 complex is encoded by a diverse superfamily of genes in Arabidopsis.</title>
        <authorList>
            <person name="Gagne J.M."/>
            <person name="Downes B.P."/>
            <person name="Shiu S.-H."/>
            <person name="Durski A.M."/>
            <person name="Vierstra R.D."/>
        </authorList>
    </citation>
    <scope>INTERACTION WITH PP2A13</scope>
</reference>
<reference key="5">
    <citation type="journal article" date="2003" name="Plant Physiol.">
        <title>Members of the Arabidopsis-SKP1-like gene family exhibit a variety of expression patterns and may play diverse roles in Arabidopsis.</title>
        <authorList>
            <person name="Zhao D."/>
            <person name="Ni W."/>
            <person name="Feng B."/>
            <person name="Han T."/>
            <person name="Petrasek M.G."/>
            <person name="Ma H."/>
        </authorList>
    </citation>
    <scope>GENE FAMILY</scope>
    <scope>NOMENCLATURE</scope>
    <scope>TISSUE SPECIFICITY</scope>
    <scope>DEVELOPMENTAL STAGE</scope>
</reference>
<sequence length="153" mass="17444">MSTKIMLKSSDGKSFEIDEDVARKSIAINHMVEDGCATDVIPLRNVTSKILKIVIDYCEKHVKSKEEEDLKEWDADFMKTIETTILFDVMMAANYLNIQSLLDLTCKTVSDLLQADLLSGKTPDEIRAHFNIENDLTAEEVAKIREENQWAFQ</sequence>
<protein>
    <recommendedName>
        <fullName>SKP1-like protein 5</fullName>
        <shortName>AtSK5</shortName>
    </recommendedName>
</protein>
<evidence type="ECO:0000250" key="1"/>
<evidence type="ECO:0000269" key="2">
    <source>
    </source>
</evidence>
<evidence type="ECO:0000269" key="3">
    <source>
    </source>
</evidence>
<evidence type="ECO:0000305" key="4"/>
<gene>
    <name type="primary">ASK5</name>
    <name type="ordered locus">At3g60020</name>
    <name type="ORF">F24G16.290</name>
    <name type="ORF">T2O9.2</name>
</gene>
<organism>
    <name type="scientific">Arabidopsis thaliana</name>
    <name type="common">Mouse-ear cress</name>
    <dbReference type="NCBI Taxonomy" id="3702"/>
    <lineage>
        <taxon>Eukaryota</taxon>
        <taxon>Viridiplantae</taxon>
        <taxon>Streptophyta</taxon>
        <taxon>Embryophyta</taxon>
        <taxon>Tracheophyta</taxon>
        <taxon>Spermatophyta</taxon>
        <taxon>Magnoliopsida</taxon>
        <taxon>eudicotyledons</taxon>
        <taxon>Gunneridae</taxon>
        <taxon>Pentapetalae</taxon>
        <taxon>rosids</taxon>
        <taxon>malvids</taxon>
        <taxon>Brassicales</taxon>
        <taxon>Brassicaceae</taxon>
        <taxon>Camelineae</taxon>
        <taxon>Arabidopsis</taxon>
    </lineage>
</organism>
<comment type="function">
    <text evidence="1">Involved in ubiquitination and subsequent proteasomal degradation of target proteins. Together with CUL1, RBX1 and a F-box protein, it forms a SCF E3 ubiquitin ligase complex. The functional specificity of this complex depends on the type of F-box protein. In the SCF complex, it serves as an adapter that links the F-box protein to CUL1 (By similarity).</text>
</comment>
<comment type="pathway">
    <text>Protein modification; protein ubiquitination.</text>
</comment>
<comment type="subunit">
    <text evidence="1 2">Part of a SCF (SKP1-cullin-F-box) protein ligase complex (By similarity). Interacts with PP2A13.</text>
</comment>
<comment type="subcellular location">
    <subcellularLocation>
        <location evidence="1">Nucleus</location>
    </subcellularLocation>
</comment>
<comment type="tissue specificity">
    <text evidence="3">Restricted to inflorescences, especially in the inflorescence meristem (IM).</text>
</comment>
<comment type="developmental stage">
    <text evidence="3">In young buds, confined to sepals and pedicels.</text>
</comment>
<comment type="similarity">
    <text evidence="4">Belongs to the SKP1 family.</text>
</comment>
<dbReference type="EMBL" id="AL138647">
    <property type="protein sequence ID" value="CAB75821.1"/>
    <property type="molecule type" value="Genomic_DNA"/>
</dbReference>
<dbReference type="EMBL" id="CP002686">
    <property type="protein sequence ID" value="AEE80003.1"/>
    <property type="molecule type" value="Genomic_DNA"/>
</dbReference>
<dbReference type="EMBL" id="DQ056631">
    <property type="protein sequence ID" value="AAY78779.1"/>
    <property type="molecule type" value="mRNA"/>
</dbReference>
<dbReference type="PIR" id="T47826">
    <property type="entry name" value="T47826"/>
</dbReference>
<dbReference type="RefSeq" id="NP_567091.1">
    <property type="nucleotide sequence ID" value="NM_115865.2"/>
</dbReference>
<dbReference type="SMR" id="Q9M1X4"/>
<dbReference type="BioGRID" id="10486">
    <property type="interactions" value="14"/>
</dbReference>
<dbReference type="ComplexPortal" id="CPX-1432">
    <property type="entry name" value="SCF(COI1) ubiquitin ligase complex, variant CUL1-RBX1A-ASK5"/>
</dbReference>
<dbReference type="ComplexPortal" id="CPX-1453">
    <property type="entry name" value="SCF(COI1) ubiquitin ligase complex, variant CUL1-RBX1B-ASK5"/>
</dbReference>
<dbReference type="ComplexPortal" id="CPX-1475">
    <property type="entry name" value="SCF(COI1) ubiquitin ligase complex, variant CUL2-RBX1A-ASK5"/>
</dbReference>
<dbReference type="ComplexPortal" id="CPX-1496">
    <property type="entry name" value="SCF(COI1) ubiquitin ligase complex, variant CUL2-RBX1B-ASK5"/>
</dbReference>
<dbReference type="ComplexPortal" id="CPX-1518">
    <property type="entry name" value="SCF(TIR1) ubiquitin ligase complex, variant CUL1-RBX1A-ASK5"/>
</dbReference>
<dbReference type="ComplexPortal" id="CPX-1539">
    <property type="entry name" value="SCF(TIR1) ubiquitin ligase complex, variant CUL1-RBX1B-ASK5"/>
</dbReference>
<dbReference type="ComplexPortal" id="CPX-1561">
    <property type="entry name" value="SCF(TIR1) ubiquitin ligase complex, variant CUL2-RBX1A-ASK5"/>
</dbReference>
<dbReference type="ComplexPortal" id="CPX-1582">
    <property type="entry name" value="SCF(TIR1) ubiquitin ligase complex, variant CUL2-RBX1B-ASK5"/>
</dbReference>
<dbReference type="FunCoup" id="Q9M1X4">
    <property type="interactions" value="159"/>
</dbReference>
<dbReference type="IntAct" id="Q9M1X4">
    <property type="interactions" value="1"/>
</dbReference>
<dbReference type="STRING" id="3702.Q9M1X4"/>
<dbReference type="PaxDb" id="3702-AT3G60020.1"/>
<dbReference type="EnsemblPlants" id="AT3G60020.1">
    <property type="protein sequence ID" value="AT3G60020.1"/>
    <property type="gene ID" value="AT3G60020"/>
</dbReference>
<dbReference type="GeneID" id="825172"/>
<dbReference type="Gramene" id="AT3G60020.1">
    <property type="protein sequence ID" value="AT3G60020.1"/>
    <property type="gene ID" value="AT3G60020"/>
</dbReference>
<dbReference type="KEGG" id="ath:AT3G60020"/>
<dbReference type="Araport" id="AT3G60020"/>
<dbReference type="TAIR" id="AT3G60020">
    <property type="gene designation" value="SK5"/>
</dbReference>
<dbReference type="eggNOG" id="KOG1724">
    <property type="taxonomic scope" value="Eukaryota"/>
</dbReference>
<dbReference type="HOGENOM" id="CLU_059252_6_1_1"/>
<dbReference type="InParanoid" id="Q9M1X4"/>
<dbReference type="OMA" id="MAEDECA"/>
<dbReference type="OrthoDB" id="1041083at2759"/>
<dbReference type="PhylomeDB" id="Q9M1X4"/>
<dbReference type="UniPathway" id="UPA00143"/>
<dbReference type="PRO" id="PR:Q9M1X4"/>
<dbReference type="Proteomes" id="UP000006548">
    <property type="component" value="Chromosome 3"/>
</dbReference>
<dbReference type="ExpressionAtlas" id="Q9M1X4">
    <property type="expression patterns" value="baseline and differential"/>
</dbReference>
<dbReference type="GO" id="GO:0005634">
    <property type="term" value="C:nucleus"/>
    <property type="evidence" value="ECO:0007005"/>
    <property type="project" value="TAIR"/>
</dbReference>
<dbReference type="GO" id="GO:0019005">
    <property type="term" value="C:SCF ubiquitin ligase complex"/>
    <property type="evidence" value="ECO:0000250"/>
    <property type="project" value="ComplexPortal"/>
</dbReference>
<dbReference type="GO" id="GO:0009734">
    <property type="term" value="P:auxin-activated signaling pathway"/>
    <property type="evidence" value="ECO:0000303"/>
    <property type="project" value="ComplexPortal"/>
</dbReference>
<dbReference type="GO" id="GO:0009867">
    <property type="term" value="P:jasmonic acid mediated signaling pathway"/>
    <property type="evidence" value="ECO:0000315"/>
    <property type="project" value="ComplexPortal"/>
</dbReference>
<dbReference type="GO" id="GO:0016567">
    <property type="term" value="P:protein ubiquitination"/>
    <property type="evidence" value="ECO:0007669"/>
    <property type="project" value="UniProtKB-UniPathway"/>
</dbReference>
<dbReference type="GO" id="GO:0009733">
    <property type="term" value="P:response to auxin"/>
    <property type="evidence" value="ECO:0000303"/>
    <property type="project" value="ComplexPortal"/>
</dbReference>
<dbReference type="GO" id="GO:0009753">
    <property type="term" value="P:response to jasmonic acid"/>
    <property type="evidence" value="ECO:0000315"/>
    <property type="project" value="ComplexPortal"/>
</dbReference>
<dbReference type="GO" id="GO:0006511">
    <property type="term" value="P:ubiquitin-dependent protein catabolic process"/>
    <property type="evidence" value="ECO:0007669"/>
    <property type="project" value="InterPro"/>
</dbReference>
<dbReference type="CDD" id="cd18322">
    <property type="entry name" value="BTB_POZ_SKP1"/>
    <property type="match status" value="1"/>
</dbReference>
<dbReference type="FunFam" id="3.30.710.10:FF:000170">
    <property type="entry name" value="SKP1-like protein 5"/>
    <property type="match status" value="1"/>
</dbReference>
<dbReference type="Gene3D" id="3.30.710.10">
    <property type="entry name" value="Potassium Channel Kv1.1, Chain A"/>
    <property type="match status" value="1"/>
</dbReference>
<dbReference type="InterPro" id="IPR016897">
    <property type="entry name" value="SKP1"/>
</dbReference>
<dbReference type="InterPro" id="IPR001232">
    <property type="entry name" value="SKP1-like"/>
</dbReference>
<dbReference type="InterPro" id="IPR036296">
    <property type="entry name" value="SKP1-like_dim_sf"/>
</dbReference>
<dbReference type="InterPro" id="IPR011333">
    <property type="entry name" value="SKP1/BTB/POZ_sf"/>
</dbReference>
<dbReference type="InterPro" id="IPR016072">
    <property type="entry name" value="Skp1_comp_dimer"/>
</dbReference>
<dbReference type="InterPro" id="IPR016073">
    <property type="entry name" value="Skp1_comp_POZ"/>
</dbReference>
<dbReference type="PANTHER" id="PTHR11165">
    <property type="entry name" value="SKP1"/>
    <property type="match status" value="1"/>
</dbReference>
<dbReference type="Pfam" id="PF01466">
    <property type="entry name" value="Skp1"/>
    <property type="match status" value="1"/>
</dbReference>
<dbReference type="Pfam" id="PF03931">
    <property type="entry name" value="Skp1_POZ"/>
    <property type="match status" value="1"/>
</dbReference>
<dbReference type="PIRSF" id="PIRSF028729">
    <property type="entry name" value="E3_ubiquit_lig_SCF_Skp"/>
    <property type="match status" value="1"/>
</dbReference>
<dbReference type="SMART" id="SM00512">
    <property type="entry name" value="Skp1"/>
    <property type="match status" value="1"/>
</dbReference>
<dbReference type="SUPFAM" id="SSF54695">
    <property type="entry name" value="POZ domain"/>
    <property type="match status" value="1"/>
</dbReference>
<dbReference type="SUPFAM" id="SSF81382">
    <property type="entry name" value="Skp1 dimerisation domain-like"/>
    <property type="match status" value="1"/>
</dbReference>
<keyword id="KW-0539">Nucleus</keyword>
<keyword id="KW-1185">Reference proteome</keyword>
<keyword id="KW-0833">Ubl conjugation pathway</keyword>
<feature type="chain" id="PRO_0000375246" description="SKP1-like protein 5">
    <location>
        <begin position="1"/>
        <end position="153"/>
    </location>
</feature>
<feature type="region of interest" description="Interaction with the F-box domain of F-box proteins" evidence="1">
    <location>
        <begin position="90"/>
        <end position="153"/>
    </location>
</feature>
<name>ASK5_ARATH</name>
<accession>Q9M1X4</accession>
<proteinExistence type="evidence at protein level"/>